<evidence type="ECO:0000250" key="1"/>
<evidence type="ECO:0000255" key="2">
    <source>
        <dbReference type="PROSITE-ProRule" id="PRU01039"/>
    </source>
</evidence>
<protein>
    <recommendedName>
        <fullName>Mu-like prophage FluMu transposase A</fullName>
    </recommendedName>
</protein>
<comment type="function">
    <text evidence="1">This transposase is essential for integration, replication-transposition, and excision of Mu-like viral DNA.</text>
</comment>
<dbReference type="EMBL" id="L42023">
    <property type="protein sequence ID" value="AAC23125.1"/>
    <property type="molecule type" value="Genomic_DNA"/>
</dbReference>
<dbReference type="PIR" id="B64126">
    <property type="entry name" value="B64126"/>
</dbReference>
<dbReference type="RefSeq" id="NP_439629.1">
    <property type="nucleotide sequence ID" value="NC_000907.1"/>
</dbReference>
<dbReference type="STRING" id="71421.HI_1478"/>
<dbReference type="EnsemblBacteria" id="AAC23125">
    <property type="protein sequence ID" value="AAC23125"/>
    <property type="gene ID" value="HI_1478"/>
</dbReference>
<dbReference type="KEGG" id="hin:HI_1478"/>
<dbReference type="PATRIC" id="fig|71421.8.peg.1546"/>
<dbReference type="eggNOG" id="COG2801">
    <property type="taxonomic scope" value="Bacteria"/>
</dbReference>
<dbReference type="HOGENOM" id="CLU_027265_1_0_6"/>
<dbReference type="OrthoDB" id="5676324at2"/>
<dbReference type="PhylomeDB" id="O05069"/>
<dbReference type="BioCyc" id="HINF71421:G1GJ1-1503-MONOMER"/>
<dbReference type="Proteomes" id="UP000000579">
    <property type="component" value="Chromosome"/>
</dbReference>
<dbReference type="GO" id="GO:0003677">
    <property type="term" value="F:DNA binding"/>
    <property type="evidence" value="ECO:0007669"/>
    <property type="project" value="UniProtKB-KW"/>
</dbReference>
<dbReference type="GO" id="GO:0004803">
    <property type="term" value="F:transposase activity"/>
    <property type="evidence" value="ECO:0007669"/>
    <property type="project" value="InterPro"/>
</dbReference>
<dbReference type="GO" id="GO:0015074">
    <property type="term" value="P:DNA integration"/>
    <property type="evidence" value="ECO:0007669"/>
    <property type="project" value="UniProtKB-KW"/>
</dbReference>
<dbReference type="GO" id="GO:0006281">
    <property type="term" value="P:DNA repair"/>
    <property type="evidence" value="ECO:0007669"/>
    <property type="project" value="UniProtKB-KW"/>
</dbReference>
<dbReference type="GO" id="GO:0006313">
    <property type="term" value="P:DNA transposition"/>
    <property type="evidence" value="ECO:0007669"/>
    <property type="project" value="InterPro"/>
</dbReference>
<dbReference type="Gene3D" id="6.10.250.2550">
    <property type="match status" value="1"/>
</dbReference>
<dbReference type="Gene3D" id="1.10.10.60">
    <property type="entry name" value="Homeodomain-like"/>
    <property type="match status" value="2"/>
</dbReference>
<dbReference type="Gene3D" id="3.30.420.10">
    <property type="entry name" value="Ribonuclease H-like superfamily/Ribonuclease H"/>
    <property type="match status" value="1"/>
</dbReference>
<dbReference type="Gene3D" id="2.30.30.130">
    <property type="entry name" value="Transposase, Mu, C-terminal"/>
    <property type="match status" value="1"/>
</dbReference>
<dbReference type="Gene3D" id="1.10.10.10">
    <property type="entry name" value="Winged helix-like DNA-binding domain superfamily/Winged helix DNA-binding domain"/>
    <property type="match status" value="1"/>
</dbReference>
<dbReference type="InterPro" id="IPR009061">
    <property type="entry name" value="DNA-bd_dom_put_sf"/>
</dbReference>
<dbReference type="InterPro" id="IPR009057">
    <property type="entry name" value="Homeodomain-like_sf"/>
</dbReference>
<dbReference type="InterPro" id="IPR003314">
    <property type="entry name" value="Mu-type_HTH"/>
</dbReference>
<dbReference type="InterPro" id="IPR015126">
    <property type="entry name" value="Mu_I-gamma"/>
</dbReference>
<dbReference type="InterPro" id="IPR004189">
    <property type="entry name" value="Phage_Mu_transposase"/>
</dbReference>
<dbReference type="InterPro" id="IPR012337">
    <property type="entry name" value="RNaseH-like_sf"/>
</dbReference>
<dbReference type="InterPro" id="IPR036397">
    <property type="entry name" value="RNaseH_sf"/>
</dbReference>
<dbReference type="InterPro" id="IPR015378">
    <property type="entry name" value="Transposase-like_Mu_C"/>
</dbReference>
<dbReference type="InterPro" id="IPR009004">
    <property type="entry name" value="Transposase_Mu_C"/>
</dbReference>
<dbReference type="InterPro" id="IPR036388">
    <property type="entry name" value="WH-like_DNA-bd_sf"/>
</dbReference>
<dbReference type="Pfam" id="PF02914">
    <property type="entry name" value="DDE_2"/>
    <property type="match status" value="1"/>
</dbReference>
<dbReference type="Pfam" id="PF02316">
    <property type="entry name" value="HTH_Tnp_Mu_1"/>
    <property type="match status" value="1"/>
</dbReference>
<dbReference type="Pfam" id="PF09039">
    <property type="entry name" value="HTH_Tnp_Mu_2"/>
    <property type="match status" value="1"/>
</dbReference>
<dbReference type="Pfam" id="PF09299">
    <property type="entry name" value="Mu-transpos_C"/>
    <property type="match status" value="1"/>
</dbReference>
<dbReference type="SUPFAM" id="SSF46689">
    <property type="entry name" value="Homeodomain-like"/>
    <property type="match status" value="2"/>
</dbReference>
<dbReference type="SUPFAM" id="SSF50610">
    <property type="entry name" value="mu transposase, C-terminal domain"/>
    <property type="match status" value="1"/>
</dbReference>
<dbReference type="SUPFAM" id="SSF46955">
    <property type="entry name" value="Putative DNA-binding domain"/>
    <property type="match status" value="1"/>
</dbReference>
<dbReference type="SUPFAM" id="SSF53098">
    <property type="entry name" value="Ribonuclease H-like"/>
    <property type="match status" value="1"/>
</dbReference>
<dbReference type="PROSITE" id="PS51702">
    <property type="entry name" value="HTH_MU"/>
    <property type="match status" value="1"/>
</dbReference>
<sequence>MDNQSLKTHYSVYELANLKLKTLPSAPKNIWEQAKRENWKSQKRQGRGGGLEYELASLPIEVQNELLLKTTPEQTAVALQKIEETRPLASNEVWQLWDEASAKAQEQAKIKLGTMFAVANLVESGVNVLDAFRLVCGKENAERLKNNEKLLSVGSLKNWWYRVKDAPRQDWLPLMLNNSGKSSKNVAEIDEAAWQFFKNFYYSREKPSLAHSYEVLKQAAQYNGWRIPSRSSLKRKMERDVPKTEEVFRREGQYALSRLYPSQVRTVAMLQAMEWINGDGYQHNVWVRFPDGEIKRPKTWLWQDVRTRKVLAARTDKSENTDTIRLSLLDVISRYGLPKHLTIDNTRAAANKKMTGGVKNRYRYQVNENEVQGIIPALGIELHWTSIQFGKGRGQAKPIERAFSHGGLGDYVDKHLLLRGAYAGANAYEKPDYDGKNGAEQPVDYATFLMALEQGIQQWNNVGNRLTEICAGKSSYAEAFERDWAVAEKRPISQSQMRLLLTLHEEVRLNQDGTFYLNAGKIGTNKNRYESLALIGTSHKRVVVRYDPANLHDKVWVYAXTGEYLAEAEITEKAGFGDQMAGREHNKAMRNWVKHTEKAAKERAKAEEMELSNYAPAVEFEERFLEMLPEPVKAPQTQAEEVEYEEVLDFNTVRKVPKAVEVEAEEISEFNRDWEKGLELLKKSKGR</sequence>
<keyword id="KW-0228">DNA excision</keyword>
<keyword id="KW-0229">DNA integration</keyword>
<keyword id="KW-0233">DNA recombination</keyword>
<keyword id="KW-0238">DNA-binding</keyword>
<keyword id="KW-1185">Reference proteome</keyword>
<keyword id="KW-0814">Transposable element</keyword>
<keyword id="KW-0815">Transposition</keyword>
<organism>
    <name type="scientific">Haemophilus influenzae (strain ATCC 51907 / DSM 11121 / KW20 / Rd)</name>
    <dbReference type="NCBI Taxonomy" id="71421"/>
    <lineage>
        <taxon>Bacteria</taxon>
        <taxon>Pseudomonadati</taxon>
        <taxon>Pseudomonadota</taxon>
        <taxon>Gammaproteobacteria</taxon>
        <taxon>Pasteurellales</taxon>
        <taxon>Pasteurellaceae</taxon>
        <taxon>Haemophilus</taxon>
    </lineage>
</organism>
<proteinExistence type="inferred from homology"/>
<feature type="chain" id="PRO_0000077585" description="Mu-like prophage FluMu transposase A">
    <location>
        <begin position="1"/>
        <end position="687"/>
    </location>
</feature>
<feature type="domain" description="HTH Mu-type" evidence="2">
    <location>
        <begin position="8"/>
        <end position="74"/>
    </location>
</feature>
<feature type="DNA-binding region" description="H-T-H motif" evidence="2">
    <location>
        <begin position="398"/>
        <end position="417"/>
    </location>
</feature>
<reference key="1">
    <citation type="journal article" date="1995" name="Science">
        <title>Whole-genome random sequencing and assembly of Haemophilus influenzae Rd.</title>
        <authorList>
            <person name="Fleischmann R.D."/>
            <person name="Adams M.D."/>
            <person name="White O."/>
            <person name="Clayton R.A."/>
            <person name="Kirkness E.F."/>
            <person name="Kerlavage A.R."/>
            <person name="Bult C.J."/>
            <person name="Tomb J.-F."/>
            <person name="Dougherty B.A."/>
            <person name="Merrick J.M."/>
            <person name="McKenney K."/>
            <person name="Sutton G.G."/>
            <person name="FitzHugh W."/>
            <person name="Fields C.A."/>
            <person name="Gocayne J.D."/>
            <person name="Scott J.D."/>
            <person name="Shirley R."/>
            <person name="Liu L.-I."/>
            <person name="Glodek A."/>
            <person name="Kelley J.M."/>
            <person name="Weidman J.F."/>
            <person name="Phillips C.A."/>
            <person name="Spriggs T."/>
            <person name="Hedblom E."/>
            <person name="Cotton M.D."/>
            <person name="Utterback T.R."/>
            <person name="Hanna M.C."/>
            <person name="Nguyen D.T."/>
            <person name="Saudek D.M."/>
            <person name="Brandon R.C."/>
            <person name="Fine L.D."/>
            <person name="Fritchman J.L."/>
            <person name="Fuhrmann J.L."/>
            <person name="Geoghagen N.S.M."/>
            <person name="Gnehm C.L."/>
            <person name="McDonald L.A."/>
            <person name="Small K.V."/>
            <person name="Fraser C.M."/>
            <person name="Smith H.O."/>
            <person name="Venter J.C."/>
        </authorList>
    </citation>
    <scope>NUCLEOTIDE SEQUENCE [LARGE SCALE GENOMIC DNA]</scope>
    <source>
        <strain>ATCC 51907 / DSM 11121 / KW20 / Rd</strain>
    </source>
</reference>
<gene>
    <name type="ordered locus">HI_1478</name>
</gene>
<accession>O05069</accession>
<name>TRA_HAEIN</name>